<accession>Q07988</accession>
<accession>D6VY43</accession>
<keyword id="KW-0134">Cell wall</keyword>
<keyword id="KW-0325">Glycoprotein</keyword>
<keyword id="KW-0336">GPI-anchor</keyword>
<keyword id="KW-0449">Lipoprotein</keyword>
<keyword id="KW-0472">Membrane</keyword>
<keyword id="KW-1185">Reference proteome</keyword>
<keyword id="KW-0964">Secreted</keyword>
<keyword id="KW-0732">Signal</keyword>
<organism>
    <name type="scientific">Saccharomyces cerevisiae (strain ATCC 204508 / S288c)</name>
    <name type="common">Baker's yeast</name>
    <dbReference type="NCBI Taxonomy" id="559292"/>
    <lineage>
        <taxon>Eukaryota</taxon>
        <taxon>Fungi</taxon>
        <taxon>Dikarya</taxon>
        <taxon>Ascomycota</taxon>
        <taxon>Saccharomycotina</taxon>
        <taxon>Saccharomycetes</taxon>
        <taxon>Saccharomycetales</taxon>
        <taxon>Saccharomycetaceae</taxon>
        <taxon>Saccharomyces</taxon>
    </lineage>
</organism>
<sequence length="224" mass="24462">MIFAPSFSLIKNILLVSFLISHSFAAKTLTSSSNDDTLARSAAADADMAFFMEFLNDFDTAFPQYTSYMMQNHLTLPQPVADYYYHMVDLASTADLQSDIAQSFPFTQFQTFITAFPWYTSLLNKASATTIYLPQHFITGETEATMTNSSYASQKNSVSNSVPFSTANAGQSMISMANEENSTTALISASNSSSTSRTSQSQNGAHAKSLYFPMALFGIFAVAL</sequence>
<feature type="signal peptide" evidence="2">
    <location>
        <begin position="1"/>
        <end position="25"/>
    </location>
</feature>
<feature type="chain" id="PRO_0000247442" description="A-factor barrier protein 1">
    <location>
        <begin position="26"/>
        <end position="203"/>
    </location>
</feature>
<feature type="propeptide" id="PRO_0000247443" description="Removed in mature form" evidence="2">
    <location>
        <begin position="204"/>
        <end position="224"/>
    </location>
</feature>
<feature type="lipid moiety-binding region" description="GPI-anchor amidated asparagine" evidence="2">
    <location>
        <position position="203"/>
    </location>
</feature>
<feature type="glycosylation site" description="N-linked (GlcNAc...) asparagine" evidence="2">
    <location>
        <position position="148"/>
    </location>
</feature>
<feature type="glycosylation site" description="N-linked (GlcNAc...) asparagine" evidence="2">
    <location>
        <position position="181"/>
    </location>
</feature>
<feature type="glycosylation site" description="N-linked (GlcNAc...) asparagine" evidence="2">
    <location>
        <position position="191"/>
    </location>
</feature>
<name>AFB1_YEAST</name>
<protein>
    <recommendedName>
        <fullName evidence="5">A-factor barrier protein 1</fullName>
    </recommendedName>
</protein>
<comment type="function">
    <text evidence="4 8">MATalpha-specific protein that interferes with a-factor, the pheromone secreted by MATa cells (PubMed:24121774). Contributes to mating efficiency (PubMed:24121774). Acts to bind and sequester a-factor rather than to degrade it, and promotes the efficient mating of MATalpha cells by keeping the a-factor concentration at the plasma membrane within the narrow range needed for accurate pheromone gradient detection (Probable).</text>
</comment>
<comment type="subcellular location">
    <subcellularLocation>
        <location evidence="7">Secreted</location>
        <location evidence="7">Cell wall</location>
    </subcellularLocation>
    <subcellularLocation>
        <location evidence="6">Membrane</location>
        <topology evidence="6">Lipid-anchor</topology>
        <topology evidence="6">GPI-anchor</topology>
    </subcellularLocation>
</comment>
<comment type="induction">
    <text evidence="3">Expression is up-regulated by the MCM1 alpha cell-type-specific transcription factor.</text>
</comment>
<comment type="PTM">
    <text evidence="1">The GPI-anchor is attached to the protein in the endoplasmic reticulum and serves to target the protein to the cell surface. There, the glucosamine-inositol phospholipid moiety is cleaved off and the GPI-modified mannoprotein is covalently attached via its lipidless GPI glycan remnant to the 1,6-beta-glucan of the outer cell wall layer (By similarity).</text>
</comment>
<comment type="similarity">
    <text evidence="6">Belongs to the SRP1/TIP1 family.</text>
</comment>
<proteinExistence type="evidence at transcript level"/>
<gene>
    <name evidence="5" type="primary">AFB1</name>
    <name type="ordered locus">YLR040C</name>
</gene>
<reference key="1">
    <citation type="journal article" date="1997" name="Nature">
        <title>The nucleotide sequence of Saccharomyces cerevisiae chromosome XII.</title>
        <authorList>
            <person name="Johnston M."/>
            <person name="Hillier L.W."/>
            <person name="Riles L."/>
            <person name="Albermann K."/>
            <person name="Andre B."/>
            <person name="Ansorge W."/>
            <person name="Benes V."/>
            <person name="Brueckner M."/>
            <person name="Delius H."/>
            <person name="Dubois E."/>
            <person name="Duesterhoeft A."/>
            <person name="Entian K.-D."/>
            <person name="Floeth M."/>
            <person name="Goffeau A."/>
            <person name="Hebling U."/>
            <person name="Heumann K."/>
            <person name="Heuss-Neitzel D."/>
            <person name="Hilbert H."/>
            <person name="Hilger F."/>
            <person name="Kleine K."/>
            <person name="Koetter P."/>
            <person name="Louis E.J."/>
            <person name="Messenguy F."/>
            <person name="Mewes H.-W."/>
            <person name="Miosga T."/>
            <person name="Moestl D."/>
            <person name="Mueller-Auer S."/>
            <person name="Nentwich U."/>
            <person name="Obermaier B."/>
            <person name="Piravandi E."/>
            <person name="Pohl T.M."/>
            <person name="Portetelle D."/>
            <person name="Purnelle B."/>
            <person name="Rechmann S."/>
            <person name="Rieger M."/>
            <person name="Rinke M."/>
            <person name="Rose M."/>
            <person name="Scharfe M."/>
            <person name="Scherens B."/>
            <person name="Scholler P."/>
            <person name="Schwager C."/>
            <person name="Schwarz S."/>
            <person name="Underwood A.P."/>
            <person name="Urrestarazu L.A."/>
            <person name="Vandenbol M."/>
            <person name="Verhasselt P."/>
            <person name="Vierendeels F."/>
            <person name="Voet M."/>
            <person name="Volckaert G."/>
            <person name="Voss H."/>
            <person name="Wambutt R."/>
            <person name="Wedler E."/>
            <person name="Wedler H."/>
            <person name="Zimmermann F.K."/>
            <person name="Zollner A."/>
            <person name="Hani J."/>
            <person name="Hoheisel J.D."/>
        </authorList>
    </citation>
    <scope>NUCLEOTIDE SEQUENCE [LARGE SCALE GENOMIC DNA]</scope>
    <source>
        <strain>ATCC 204508 / S288c</strain>
    </source>
</reference>
<reference key="2">
    <citation type="journal article" date="2014" name="G3 (Bethesda)">
        <title>The reference genome sequence of Saccharomyces cerevisiae: Then and now.</title>
        <authorList>
            <person name="Engel S.R."/>
            <person name="Dietrich F.S."/>
            <person name="Fisk D.G."/>
            <person name="Binkley G."/>
            <person name="Balakrishnan R."/>
            <person name="Costanzo M.C."/>
            <person name="Dwight S.S."/>
            <person name="Hitz B.C."/>
            <person name="Karra K."/>
            <person name="Nash R.S."/>
            <person name="Weng S."/>
            <person name="Wong E.D."/>
            <person name="Lloyd P."/>
            <person name="Skrzypek M.S."/>
            <person name="Miyasato S.R."/>
            <person name="Simison M."/>
            <person name="Cherry J.M."/>
        </authorList>
    </citation>
    <scope>GENOME REANNOTATION</scope>
    <source>
        <strain>ATCC 204508 / S288c</strain>
    </source>
</reference>
<reference key="3">
    <citation type="journal article" date="2007" name="Genome Res.">
        <title>Approaching a complete repository of sequence-verified protein-encoding clones for Saccharomyces cerevisiae.</title>
        <authorList>
            <person name="Hu Y."/>
            <person name="Rolfs A."/>
            <person name="Bhullar B."/>
            <person name="Murthy T.V.S."/>
            <person name="Zhu C."/>
            <person name="Berger M.F."/>
            <person name="Camargo A.A."/>
            <person name="Kelley F."/>
            <person name="McCarron S."/>
            <person name="Jepson D."/>
            <person name="Richardson A."/>
            <person name="Raphael J."/>
            <person name="Moreira D."/>
            <person name="Taycher E."/>
            <person name="Zuo D."/>
            <person name="Mohr S."/>
            <person name="Kane M.F."/>
            <person name="Williamson J."/>
            <person name="Simpson A.J.G."/>
            <person name="Bulyk M.L."/>
            <person name="Harlow E."/>
            <person name="Marsischky G."/>
            <person name="Kolodner R.D."/>
            <person name="LaBaer J."/>
        </authorList>
    </citation>
    <scope>NUCLEOTIDE SEQUENCE [GENOMIC DNA]</scope>
    <source>
        <strain>ATCC 204508 / S288c</strain>
    </source>
</reference>
<reference key="4">
    <citation type="journal article" date="1999" name="J. Bacteriol.">
        <title>Amino acid residues in the omega-minus region participate in cellular localization of yeast glycosylphosphatidylinositol-attached proteins.</title>
        <authorList>
            <person name="Hamada K."/>
            <person name="Terashima H."/>
            <person name="Arisawa M."/>
            <person name="Yabuki N."/>
            <person name="Kitada K."/>
        </authorList>
    </citation>
    <scope>SUBCELLULAR LOCATION</scope>
</reference>
<reference key="5">
    <citation type="journal article" date="2004" name="Proc. Natl. Acad. Sci. U.S.A.">
        <title>Genomic dissection of the cell-type-specification circuit in Saccharomyces cerevisiae.</title>
        <authorList>
            <person name="Galgoczy D.J."/>
            <person name="Cassidy-Stone A."/>
            <person name="Llinas M."/>
            <person name="O'Rourke S.M."/>
            <person name="Herskowitz I."/>
            <person name="DeRisi J.L."/>
            <person name="Johnson A.D."/>
        </authorList>
    </citation>
    <scope>INDUCTION</scope>
</reference>
<reference key="6">
    <citation type="journal article" date="2013" name="Genetics">
        <title>Genetically engineered transvestites reveal novel mating genes in budding yeast.</title>
        <authorList>
            <person name="Huberman L.B."/>
            <person name="Murray A.W."/>
        </authorList>
    </citation>
    <scope>FUNCTION</scope>
</reference>
<dbReference type="EMBL" id="Z73212">
    <property type="protein sequence ID" value="CAA97568.1"/>
    <property type="molecule type" value="Genomic_DNA"/>
</dbReference>
<dbReference type="EMBL" id="AY557938">
    <property type="protein sequence ID" value="AAS56264.1"/>
    <property type="molecule type" value="Genomic_DNA"/>
</dbReference>
<dbReference type="EMBL" id="BK006945">
    <property type="protein sequence ID" value="DAA09359.1"/>
    <property type="molecule type" value="Genomic_DNA"/>
</dbReference>
<dbReference type="PIR" id="S64867">
    <property type="entry name" value="S64867"/>
</dbReference>
<dbReference type="RefSeq" id="NP_013141.1">
    <property type="nucleotide sequence ID" value="NM_001181927.1"/>
</dbReference>
<dbReference type="BioGRID" id="31316">
    <property type="interactions" value="27"/>
</dbReference>
<dbReference type="DIP" id="DIP-5030N"/>
<dbReference type="FunCoup" id="Q07988">
    <property type="interactions" value="70"/>
</dbReference>
<dbReference type="IntAct" id="Q07988">
    <property type="interactions" value="1"/>
</dbReference>
<dbReference type="STRING" id="4932.YLR040C"/>
<dbReference type="GlyCosmos" id="Q07988">
    <property type="glycosylation" value="3 sites, No reported glycans"/>
</dbReference>
<dbReference type="GlyGen" id="Q07988">
    <property type="glycosylation" value="3 sites"/>
</dbReference>
<dbReference type="iPTMnet" id="Q07988"/>
<dbReference type="PaxDb" id="4932-YLR040C"/>
<dbReference type="PeptideAtlas" id="Q07988"/>
<dbReference type="EnsemblFungi" id="YLR040C_mRNA">
    <property type="protein sequence ID" value="YLR040C"/>
    <property type="gene ID" value="YLR040C"/>
</dbReference>
<dbReference type="GeneID" id="850730"/>
<dbReference type="KEGG" id="sce:YLR040C"/>
<dbReference type="AGR" id="SGD:S000004030"/>
<dbReference type="SGD" id="S000004030">
    <property type="gene designation" value="AFB1"/>
</dbReference>
<dbReference type="VEuPathDB" id="FungiDB:YLR040C"/>
<dbReference type="eggNOG" id="ENOG502S3Y9">
    <property type="taxonomic scope" value="Eukaryota"/>
</dbReference>
<dbReference type="HOGENOM" id="CLU_092872_0_0_1"/>
<dbReference type="InParanoid" id="Q07988"/>
<dbReference type="OMA" id="AFPWYSS"/>
<dbReference type="OrthoDB" id="4069604at2759"/>
<dbReference type="BioCyc" id="YEAST:G3O-32198-MONOMER"/>
<dbReference type="BioGRID-ORCS" id="850730">
    <property type="hits" value="1 hit in 10 CRISPR screens"/>
</dbReference>
<dbReference type="PRO" id="PR:Q07988"/>
<dbReference type="Proteomes" id="UP000002311">
    <property type="component" value="Chromosome XII"/>
</dbReference>
<dbReference type="RNAct" id="Q07988">
    <property type="molecule type" value="protein"/>
</dbReference>
<dbReference type="GO" id="GO:0071944">
    <property type="term" value="C:cell periphery"/>
    <property type="evidence" value="ECO:0007005"/>
    <property type="project" value="SGD"/>
</dbReference>
<dbReference type="GO" id="GO:0005576">
    <property type="term" value="C:extracellular region"/>
    <property type="evidence" value="ECO:0007669"/>
    <property type="project" value="UniProtKB-KW"/>
</dbReference>
<dbReference type="GO" id="GO:0009277">
    <property type="term" value="C:fungal-type cell wall"/>
    <property type="evidence" value="ECO:0000314"/>
    <property type="project" value="SGD"/>
</dbReference>
<dbReference type="GO" id="GO:0098552">
    <property type="term" value="C:side of membrane"/>
    <property type="evidence" value="ECO:0007669"/>
    <property type="project" value="UniProtKB-KW"/>
</dbReference>
<dbReference type="GO" id="GO:0000749">
    <property type="term" value="P:response to pheromone triggering conjugation with cellular fusion"/>
    <property type="evidence" value="ECO:0000315"/>
    <property type="project" value="SGD"/>
</dbReference>
<dbReference type="InterPro" id="IPR000992">
    <property type="entry name" value="SRP1_TIP1"/>
</dbReference>
<dbReference type="Pfam" id="PF00660">
    <property type="entry name" value="SRP1_TIP1"/>
    <property type="match status" value="1"/>
</dbReference>
<evidence type="ECO:0000250" key="1"/>
<evidence type="ECO:0000255" key="2"/>
<evidence type="ECO:0000269" key="3">
    <source>
    </source>
</evidence>
<evidence type="ECO:0000269" key="4">
    <source>
    </source>
</evidence>
<evidence type="ECO:0000303" key="5">
    <source>
    </source>
</evidence>
<evidence type="ECO:0000305" key="6"/>
<evidence type="ECO:0000305" key="7">
    <source>
    </source>
</evidence>
<evidence type="ECO:0000305" key="8">
    <source>
    </source>
</evidence>